<reference key="1">
    <citation type="journal article" date="2005" name="J. Biol. Chem.">
        <title>The crystal structure of archaeal nascent polypeptide-associated complex (NAC) reveals a unique fold and the presence of a ubiquitin-associated domain.</title>
        <authorList>
            <person name="Spreter T."/>
            <person name="Pech M."/>
            <person name="Beatrix B."/>
        </authorList>
    </citation>
    <scope>NUCLEOTIDE SEQUENCE [GENOMIC DNA]</scope>
    <scope>X-RAY CRYSTALLOGRAPHY (2.27 ANGSTROMS) OF 19-117</scope>
    <scope>SUBUNIT</scope>
    <source>
        <strain>ATCC BAA-927 / DSM 2133 / JCM 14651 / NBRC 100331 / OCM 82 / Marburg</strain>
    </source>
</reference>
<reference key="2">
    <citation type="journal article" date="2010" name="J. Bacteriol.">
        <title>Complete genome sequence of Methanothermobacter marburgensis, a methanoarchaeon model organism.</title>
        <authorList>
            <person name="Liesegang H."/>
            <person name="Kaster A.K."/>
            <person name="Wiezer A."/>
            <person name="Goenrich M."/>
            <person name="Wollherr A."/>
            <person name="Seedorf H."/>
            <person name="Gottschalk G."/>
            <person name="Thauer R.K."/>
        </authorList>
    </citation>
    <scope>NUCLEOTIDE SEQUENCE [LARGE SCALE GENOMIC DNA]</scope>
    <source>
        <strain>ATCC BAA-927 / DSM 2133 / JCM 14651 / NBRC 100331 / OCM 82 / Marburg</strain>
    </source>
</reference>
<comment type="function">
    <text evidence="1">Contacts the emerging nascent chain on the ribosome.</text>
</comment>
<comment type="subunit">
    <text evidence="1 2">Homodimer. Interacts with the ribosome. Binds ribosomal RNA.</text>
</comment>
<comment type="similarity">
    <text evidence="1">Belongs to the NAC-alpha family.</text>
</comment>
<evidence type="ECO:0000255" key="1">
    <source>
        <dbReference type="HAMAP-Rule" id="MF_00814"/>
    </source>
</evidence>
<evidence type="ECO:0000269" key="2">
    <source>
    </source>
</evidence>
<evidence type="ECO:0000305" key="3"/>
<evidence type="ECO:0007829" key="4">
    <source>
        <dbReference type="PDB" id="1TR8"/>
    </source>
</evidence>
<name>NAC_METTM</name>
<sequence length="117" mass="13242">MIPGMGMNPKQLKQMQRAMKQMGMDMKDLRGVEEVVIKLKKKEIIIKNPRVNVMDFMGQKTYQVTGKARECDLEAEVKIPDDDIELVMNQTGVSREEATRALQETGGDLAEAIMRLS</sequence>
<feature type="chain" id="PRO_0000135600" description="Nascent polypeptide-associated complex protein">
    <location>
        <begin position="1"/>
        <end position="117"/>
    </location>
</feature>
<feature type="domain" description="NAC-A/B" evidence="1">
    <location>
        <begin position="9"/>
        <end position="77"/>
    </location>
</feature>
<feature type="sequence conflict" description="In Ref. 1; no nucleotide entry." evidence="3" ref="1">
    <original>K</original>
    <variation>R</variation>
    <location>
        <position position="41"/>
    </location>
</feature>
<feature type="sequence conflict" description="In Ref. 1; no nucleotide entry." evidence="3" ref="1">
    <original>R</original>
    <variation>K</variation>
    <location>
        <position position="50"/>
    </location>
</feature>
<feature type="sequence conflict" description="In Ref. 1; no nucleotide entry." evidence="3" ref="1">
    <original>D</original>
    <variation>E</variation>
    <location>
        <position position="55"/>
    </location>
</feature>
<feature type="sequence conflict" description="In Ref. 1; no nucleotide entry." evidence="3" ref="1">
    <original>CD</original>
    <variation>RS</variation>
    <location>
        <begin position="71"/>
        <end position="72"/>
    </location>
</feature>
<feature type="sequence conflict" description="In Ref. 1; no nucleotide entry." evidence="3" ref="1">
    <original>VK</original>
    <variation>ME</variation>
    <location>
        <begin position="77"/>
        <end position="78"/>
    </location>
</feature>
<feature type="sequence conflict" description="In Ref. 1; no nucleotide entry." evidence="3" ref="1">
    <original>D</original>
    <variation>E</variation>
    <location>
        <position position="81"/>
    </location>
</feature>
<feature type="sequence conflict" description="In Ref. 1; no nucleotide entry." evidence="3" ref="1">
    <original>V</original>
    <variation>A</variation>
    <location>
        <position position="93"/>
    </location>
</feature>
<feature type="sequence conflict" description="In Ref. 1; no nucleotide entry." evidence="3" ref="1">
    <original>E</original>
    <variation>D</variation>
    <location>
        <position position="97"/>
    </location>
</feature>
<feature type="strand" evidence="4">
    <location>
        <begin position="27"/>
        <end position="29"/>
    </location>
</feature>
<feature type="strand" evidence="4">
    <location>
        <begin position="34"/>
        <end position="38"/>
    </location>
</feature>
<feature type="strand" evidence="4">
    <location>
        <begin position="40"/>
        <end position="48"/>
    </location>
</feature>
<feature type="strand" evidence="4">
    <location>
        <begin position="50"/>
        <end position="56"/>
    </location>
</feature>
<feature type="strand" evidence="4">
    <location>
        <begin position="59"/>
        <end position="66"/>
    </location>
</feature>
<feature type="strand" evidence="4">
    <location>
        <begin position="68"/>
        <end position="76"/>
    </location>
</feature>
<feature type="helix" evidence="4">
    <location>
        <begin position="81"/>
        <end position="91"/>
    </location>
</feature>
<feature type="helix" evidence="4">
    <location>
        <begin position="95"/>
        <end position="104"/>
    </location>
</feature>
<feature type="turn" evidence="4">
    <location>
        <begin position="105"/>
        <end position="107"/>
    </location>
</feature>
<feature type="helix" evidence="4">
    <location>
        <begin position="109"/>
        <end position="115"/>
    </location>
</feature>
<organism>
    <name type="scientific">Methanothermobacter marburgensis (strain ATCC BAA-927 / DSM 2133 / JCM 14651 / NBRC 100331 / OCM 82 / Marburg)</name>
    <name type="common">Methanobacterium thermoautotrophicum</name>
    <dbReference type="NCBI Taxonomy" id="79929"/>
    <lineage>
        <taxon>Archaea</taxon>
        <taxon>Methanobacteriati</taxon>
        <taxon>Methanobacteriota</taxon>
        <taxon>Methanomada group</taxon>
        <taxon>Methanobacteria</taxon>
        <taxon>Methanobacteriales</taxon>
        <taxon>Methanobacteriaceae</taxon>
        <taxon>Methanothermobacter</taxon>
    </lineage>
</organism>
<dbReference type="EMBL" id="CP001710">
    <property type="protein sequence ID" value="ADL58225.1"/>
    <property type="molecule type" value="Genomic_DNA"/>
</dbReference>
<dbReference type="RefSeq" id="WP_013295449.1">
    <property type="nucleotide sequence ID" value="NC_014408.1"/>
</dbReference>
<dbReference type="PDB" id="1TR8">
    <property type="method" value="X-ray"/>
    <property type="resolution" value="2.27 A"/>
    <property type="chains" value="A/B=19-117"/>
</dbReference>
<dbReference type="PDBsum" id="1TR8"/>
<dbReference type="SMR" id="P0C0K9"/>
<dbReference type="STRING" id="79929.MTBMA_c06300"/>
<dbReference type="PaxDb" id="79929-MTBMA_c06300"/>
<dbReference type="GeneID" id="58978246"/>
<dbReference type="GeneID" id="9704338"/>
<dbReference type="KEGG" id="mmg:MTBMA_c06300"/>
<dbReference type="PATRIC" id="fig|79929.8.peg.614"/>
<dbReference type="HOGENOM" id="CLU_146475_0_0_2"/>
<dbReference type="OrthoDB" id="53273at2157"/>
<dbReference type="EvolutionaryTrace" id="P0C0K9"/>
<dbReference type="Proteomes" id="UP000000345">
    <property type="component" value="Chromosome"/>
</dbReference>
<dbReference type="GO" id="GO:0005854">
    <property type="term" value="C:nascent polypeptide-associated complex"/>
    <property type="evidence" value="ECO:0007669"/>
    <property type="project" value="InterPro"/>
</dbReference>
<dbReference type="GO" id="GO:0003723">
    <property type="term" value="F:RNA binding"/>
    <property type="evidence" value="ECO:0007669"/>
    <property type="project" value="UniProtKB-UniRule"/>
</dbReference>
<dbReference type="GO" id="GO:0015031">
    <property type="term" value="P:protein transport"/>
    <property type="evidence" value="ECO:0007669"/>
    <property type="project" value="UniProtKB-UniRule"/>
</dbReference>
<dbReference type="CDD" id="cd14359">
    <property type="entry name" value="UBA_AeNAC"/>
    <property type="match status" value="1"/>
</dbReference>
<dbReference type="Gene3D" id="1.10.8.10">
    <property type="entry name" value="DNA helicase RuvA subunit, C-terminal domain"/>
    <property type="match status" value="1"/>
</dbReference>
<dbReference type="Gene3D" id="2.20.70.30">
    <property type="entry name" value="Nascent polypeptide-associated complex domain"/>
    <property type="match status" value="1"/>
</dbReference>
<dbReference type="HAMAP" id="MF_00814">
    <property type="entry name" value="NAC_arch"/>
    <property type="match status" value="1"/>
</dbReference>
<dbReference type="IDEAL" id="IID90013"/>
<dbReference type="InterPro" id="IPR016641">
    <property type="entry name" value="EGD2/NACA0like"/>
</dbReference>
<dbReference type="InterPro" id="IPR044034">
    <property type="entry name" value="NAC-like_UBA"/>
</dbReference>
<dbReference type="InterPro" id="IPR038187">
    <property type="entry name" value="NAC_A/B_dom_sf"/>
</dbReference>
<dbReference type="InterPro" id="IPR005231">
    <property type="entry name" value="NAC_arc"/>
</dbReference>
<dbReference type="InterPro" id="IPR002715">
    <property type="entry name" value="Nas_poly-pep-assoc_cplx_dom"/>
</dbReference>
<dbReference type="InterPro" id="IPR009060">
    <property type="entry name" value="UBA-like_sf"/>
</dbReference>
<dbReference type="NCBIfam" id="TIGR00264">
    <property type="entry name" value="archaeal-type nascent polypeptide-associated complex protein"/>
    <property type="match status" value="1"/>
</dbReference>
<dbReference type="PANTHER" id="PTHR21713">
    <property type="entry name" value="NASCENT POLYPEPTIDE ASSOCIATED COMPLEX ALPHA SUBUNIT-RELATED"/>
    <property type="match status" value="1"/>
</dbReference>
<dbReference type="Pfam" id="PF01849">
    <property type="entry name" value="NAC"/>
    <property type="match status" value="1"/>
</dbReference>
<dbReference type="Pfam" id="PF19026">
    <property type="entry name" value="UBA_HYPK"/>
    <property type="match status" value="1"/>
</dbReference>
<dbReference type="SMART" id="SM01407">
    <property type="entry name" value="NAC"/>
    <property type="match status" value="1"/>
</dbReference>
<dbReference type="SUPFAM" id="SSF46934">
    <property type="entry name" value="UBA-like"/>
    <property type="match status" value="1"/>
</dbReference>
<dbReference type="PROSITE" id="PS51151">
    <property type="entry name" value="NAC_AB"/>
    <property type="match status" value="1"/>
</dbReference>
<protein>
    <recommendedName>
        <fullName evidence="1">Nascent polypeptide-associated complex protein</fullName>
    </recommendedName>
</protein>
<proteinExistence type="evidence at protein level"/>
<keyword id="KW-0002">3D-structure</keyword>
<keyword id="KW-0653">Protein transport</keyword>
<keyword id="KW-0694">RNA-binding</keyword>
<keyword id="KW-0813">Transport</keyword>
<accession>P0C0K9</accession>
<accession>D9PVH7</accession>
<gene>
    <name evidence="1" type="primary">nac</name>
    <name type="ordered locus">MTBMA_c06300</name>
</gene>